<sequence>MKFELDTTQGRARRGRLIFDRGTVETPAFMPVGTYGTVKGMTPEEVRATGADILLGNTFHLWLRPGEEIMRKHGDLHDFMNWQRPILTDSGGFQVFSLGDIRKITEEGVHFRSPINGEKIFLDPEKSMQIQDSLGSDVVMIFDECTPYPATEDEARKSMQMSLRWAQRSRDEFDRLENPNALFGIIQGGVYEDLRDESLTGLVNIGFDGYAIGGLAVGEPKPDMHRILEHVCPQIPADKPRYLMGVGKPEDLVEGVRRGVDMFDCVMPTRNARNGHLFTSEGVIKIRNARHRDDTAPLDEKCDCYTCKNYSRAYLYHLDRCNEILGARLNTIHNLRYYQMLMEGLRGAIETGTLDAFVSDFYTGLGREVPEVPELVD</sequence>
<keyword id="KW-0328">Glycosyltransferase</keyword>
<keyword id="KW-0479">Metal-binding</keyword>
<keyword id="KW-0671">Queuosine biosynthesis</keyword>
<keyword id="KW-1185">Reference proteome</keyword>
<keyword id="KW-0808">Transferase</keyword>
<keyword id="KW-0819">tRNA processing</keyword>
<keyword id="KW-0862">Zinc</keyword>
<protein>
    <recommendedName>
        <fullName evidence="1">Queuine tRNA-ribosyltransferase</fullName>
        <ecNumber evidence="1">2.4.2.29</ecNumber>
    </recommendedName>
    <alternativeName>
        <fullName evidence="1">Guanine insertion enzyme</fullName>
    </alternativeName>
    <alternativeName>
        <fullName evidence="1">tRNA-guanine transglycosylase</fullName>
    </alternativeName>
</protein>
<reference key="1">
    <citation type="submission" date="2006-03" db="EMBL/GenBank/DDBJ databases">
        <title>Complete sequence of Shewanella denitrificans OS217.</title>
        <authorList>
            <consortium name="US DOE Joint Genome Institute"/>
            <person name="Copeland A."/>
            <person name="Lucas S."/>
            <person name="Lapidus A."/>
            <person name="Barry K."/>
            <person name="Detter J.C."/>
            <person name="Glavina del Rio T."/>
            <person name="Hammon N."/>
            <person name="Israni S."/>
            <person name="Dalin E."/>
            <person name="Tice H."/>
            <person name="Pitluck S."/>
            <person name="Brettin T."/>
            <person name="Bruce D."/>
            <person name="Han C."/>
            <person name="Tapia R."/>
            <person name="Gilna P."/>
            <person name="Kiss H."/>
            <person name="Schmutz J."/>
            <person name="Larimer F."/>
            <person name="Land M."/>
            <person name="Hauser L."/>
            <person name="Kyrpides N."/>
            <person name="Lykidis A."/>
            <person name="Richardson P."/>
        </authorList>
    </citation>
    <scope>NUCLEOTIDE SEQUENCE [LARGE SCALE GENOMIC DNA]</scope>
    <source>
        <strain>OS217 / ATCC BAA-1090 / DSM 15013</strain>
    </source>
</reference>
<organism>
    <name type="scientific">Shewanella denitrificans (strain OS217 / ATCC BAA-1090 / DSM 15013)</name>
    <dbReference type="NCBI Taxonomy" id="318161"/>
    <lineage>
        <taxon>Bacteria</taxon>
        <taxon>Pseudomonadati</taxon>
        <taxon>Pseudomonadota</taxon>
        <taxon>Gammaproteobacteria</taxon>
        <taxon>Alteromonadales</taxon>
        <taxon>Shewanellaceae</taxon>
        <taxon>Shewanella</taxon>
    </lineage>
</organism>
<dbReference type="EC" id="2.4.2.29" evidence="1"/>
<dbReference type="EMBL" id="CP000302">
    <property type="protein sequence ID" value="ABE54687.1"/>
    <property type="molecule type" value="Genomic_DNA"/>
</dbReference>
<dbReference type="RefSeq" id="WP_011495845.1">
    <property type="nucleotide sequence ID" value="NC_007954.1"/>
</dbReference>
<dbReference type="SMR" id="Q12PD9"/>
<dbReference type="STRING" id="318161.Sden_1401"/>
<dbReference type="KEGG" id="sdn:Sden_1401"/>
<dbReference type="eggNOG" id="COG0343">
    <property type="taxonomic scope" value="Bacteria"/>
</dbReference>
<dbReference type="HOGENOM" id="CLU_022060_0_1_6"/>
<dbReference type="OrthoDB" id="9805417at2"/>
<dbReference type="UniPathway" id="UPA00392"/>
<dbReference type="Proteomes" id="UP000001982">
    <property type="component" value="Chromosome"/>
</dbReference>
<dbReference type="GO" id="GO:0005829">
    <property type="term" value="C:cytosol"/>
    <property type="evidence" value="ECO:0007669"/>
    <property type="project" value="TreeGrafter"/>
</dbReference>
<dbReference type="GO" id="GO:0046872">
    <property type="term" value="F:metal ion binding"/>
    <property type="evidence" value="ECO:0007669"/>
    <property type="project" value="UniProtKB-KW"/>
</dbReference>
<dbReference type="GO" id="GO:0008479">
    <property type="term" value="F:tRNA-guanosine(34) queuine transglycosylase activity"/>
    <property type="evidence" value="ECO:0007669"/>
    <property type="project" value="UniProtKB-UniRule"/>
</dbReference>
<dbReference type="GO" id="GO:0008616">
    <property type="term" value="P:queuosine biosynthetic process"/>
    <property type="evidence" value="ECO:0007669"/>
    <property type="project" value="UniProtKB-UniRule"/>
</dbReference>
<dbReference type="GO" id="GO:0002099">
    <property type="term" value="P:tRNA wobble guanine modification"/>
    <property type="evidence" value="ECO:0007669"/>
    <property type="project" value="TreeGrafter"/>
</dbReference>
<dbReference type="GO" id="GO:0101030">
    <property type="term" value="P:tRNA-guanine transglycosylation"/>
    <property type="evidence" value="ECO:0007669"/>
    <property type="project" value="InterPro"/>
</dbReference>
<dbReference type="FunFam" id="3.20.20.105:FF:000001">
    <property type="entry name" value="Queuine tRNA-ribosyltransferase"/>
    <property type="match status" value="1"/>
</dbReference>
<dbReference type="Gene3D" id="3.20.20.105">
    <property type="entry name" value="Queuine tRNA-ribosyltransferase-like"/>
    <property type="match status" value="1"/>
</dbReference>
<dbReference type="HAMAP" id="MF_00168">
    <property type="entry name" value="Q_tRNA_Tgt"/>
    <property type="match status" value="1"/>
</dbReference>
<dbReference type="InterPro" id="IPR050076">
    <property type="entry name" value="ArchSynthase1/Queuine_TRR"/>
</dbReference>
<dbReference type="InterPro" id="IPR004803">
    <property type="entry name" value="TGT"/>
</dbReference>
<dbReference type="InterPro" id="IPR036511">
    <property type="entry name" value="TGT-like_sf"/>
</dbReference>
<dbReference type="InterPro" id="IPR002616">
    <property type="entry name" value="tRNA_ribo_trans-like"/>
</dbReference>
<dbReference type="NCBIfam" id="TIGR00430">
    <property type="entry name" value="Q_tRNA_tgt"/>
    <property type="match status" value="1"/>
</dbReference>
<dbReference type="NCBIfam" id="TIGR00449">
    <property type="entry name" value="tgt_general"/>
    <property type="match status" value="1"/>
</dbReference>
<dbReference type="PANTHER" id="PTHR46499">
    <property type="entry name" value="QUEUINE TRNA-RIBOSYLTRANSFERASE"/>
    <property type="match status" value="1"/>
</dbReference>
<dbReference type="PANTHER" id="PTHR46499:SF1">
    <property type="entry name" value="QUEUINE TRNA-RIBOSYLTRANSFERASE"/>
    <property type="match status" value="1"/>
</dbReference>
<dbReference type="Pfam" id="PF01702">
    <property type="entry name" value="TGT"/>
    <property type="match status" value="1"/>
</dbReference>
<dbReference type="SUPFAM" id="SSF51713">
    <property type="entry name" value="tRNA-guanine transglycosylase"/>
    <property type="match status" value="1"/>
</dbReference>
<name>TGT_SHEDO</name>
<accession>Q12PD9</accession>
<evidence type="ECO:0000255" key="1">
    <source>
        <dbReference type="HAMAP-Rule" id="MF_00168"/>
    </source>
</evidence>
<proteinExistence type="inferred from homology"/>
<comment type="function">
    <text evidence="1">Catalyzes the base-exchange of a guanine (G) residue with the queuine precursor 7-aminomethyl-7-deazaguanine (PreQ1) at position 34 (anticodon wobble position) in tRNAs with GU(N) anticodons (tRNA-Asp, -Asn, -His and -Tyr). Catalysis occurs through a double-displacement mechanism. The nucleophile active site attacks the C1' of nucleotide 34 to detach the guanine base from the RNA, forming a covalent enzyme-RNA intermediate. The proton acceptor active site deprotonates the incoming PreQ1, allowing a nucleophilic attack on the C1' of the ribose to form the product. After dissociation, two additional enzymatic reactions on the tRNA convert PreQ1 to queuine (Q), resulting in the hypermodified nucleoside queuosine (7-(((4,5-cis-dihydroxy-2-cyclopenten-1-yl)amino)methyl)-7-deazaguanosine).</text>
</comment>
<comment type="catalytic activity">
    <reaction evidence="1">
        <text>7-aminomethyl-7-carbaguanine + guanosine(34) in tRNA = 7-aminomethyl-7-carbaguanosine(34) in tRNA + guanine</text>
        <dbReference type="Rhea" id="RHEA:24104"/>
        <dbReference type="Rhea" id="RHEA-COMP:10341"/>
        <dbReference type="Rhea" id="RHEA-COMP:10342"/>
        <dbReference type="ChEBI" id="CHEBI:16235"/>
        <dbReference type="ChEBI" id="CHEBI:58703"/>
        <dbReference type="ChEBI" id="CHEBI:74269"/>
        <dbReference type="ChEBI" id="CHEBI:82833"/>
        <dbReference type="EC" id="2.4.2.29"/>
    </reaction>
</comment>
<comment type="cofactor">
    <cofactor evidence="1">
        <name>Zn(2+)</name>
        <dbReference type="ChEBI" id="CHEBI:29105"/>
    </cofactor>
    <text evidence="1">Binds 1 zinc ion per subunit.</text>
</comment>
<comment type="pathway">
    <text evidence="1">tRNA modification; tRNA-queuosine biosynthesis.</text>
</comment>
<comment type="subunit">
    <text evidence="1">Homodimer. Within each dimer, one monomer is responsible for RNA recognition and catalysis, while the other monomer binds to the replacement base PreQ1.</text>
</comment>
<comment type="similarity">
    <text evidence="1">Belongs to the queuine tRNA-ribosyltransferase family.</text>
</comment>
<feature type="chain" id="PRO_1000016846" description="Queuine tRNA-ribosyltransferase">
    <location>
        <begin position="1"/>
        <end position="377"/>
    </location>
</feature>
<feature type="region of interest" description="RNA binding" evidence="1">
    <location>
        <begin position="245"/>
        <end position="251"/>
    </location>
</feature>
<feature type="region of interest" description="RNA binding; important for wobble base 34 recognition" evidence="1">
    <location>
        <begin position="269"/>
        <end position="273"/>
    </location>
</feature>
<feature type="active site" description="Proton acceptor" evidence="1">
    <location>
        <position position="89"/>
    </location>
</feature>
<feature type="active site" description="Nucleophile" evidence="1">
    <location>
        <position position="264"/>
    </location>
</feature>
<feature type="binding site" evidence="1">
    <location>
        <begin position="89"/>
        <end position="93"/>
    </location>
    <ligand>
        <name>substrate</name>
    </ligand>
</feature>
<feature type="binding site" evidence="1">
    <location>
        <position position="143"/>
    </location>
    <ligand>
        <name>substrate</name>
    </ligand>
</feature>
<feature type="binding site" evidence="1">
    <location>
        <position position="187"/>
    </location>
    <ligand>
        <name>substrate</name>
    </ligand>
</feature>
<feature type="binding site" evidence="1">
    <location>
        <position position="214"/>
    </location>
    <ligand>
        <name>substrate</name>
    </ligand>
</feature>
<feature type="binding site" evidence="1">
    <location>
        <position position="302"/>
    </location>
    <ligand>
        <name>Zn(2+)</name>
        <dbReference type="ChEBI" id="CHEBI:29105"/>
    </ligand>
</feature>
<feature type="binding site" evidence="1">
    <location>
        <position position="304"/>
    </location>
    <ligand>
        <name>Zn(2+)</name>
        <dbReference type="ChEBI" id="CHEBI:29105"/>
    </ligand>
</feature>
<feature type="binding site" evidence="1">
    <location>
        <position position="307"/>
    </location>
    <ligand>
        <name>Zn(2+)</name>
        <dbReference type="ChEBI" id="CHEBI:29105"/>
    </ligand>
</feature>
<feature type="binding site" evidence="1">
    <location>
        <position position="333"/>
    </location>
    <ligand>
        <name>Zn(2+)</name>
        <dbReference type="ChEBI" id="CHEBI:29105"/>
    </ligand>
</feature>
<gene>
    <name evidence="1" type="primary">tgt</name>
    <name type="ordered locus">Sden_1401</name>
</gene>